<dbReference type="EMBL" id="AE016853">
    <property type="protein sequence ID" value="AAO58372.1"/>
    <property type="molecule type" value="Genomic_DNA"/>
</dbReference>
<dbReference type="RefSeq" id="NP_794677.1">
    <property type="nucleotide sequence ID" value="NC_004578.1"/>
</dbReference>
<dbReference type="RefSeq" id="WP_011105240.1">
    <property type="nucleotide sequence ID" value="NC_004578.1"/>
</dbReference>
<dbReference type="SMR" id="Q87VJ2"/>
<dbReference type="STRING" id="223283.PSPTO_4944"/>
<dbReference type="GeneID" id="1186629"/>
<dbReference type="KEGG" id="pst:PSPTO_4944"/>
<dbReference type="PATRIC" id="fig|223283.9.peg.5058"/>
<dbReference type="eggNOG" id="COG0323">
    <property type="taxonomic scope" value="Bacteria"/>
</dbReference>
<dbReference type="HOGENOM" id="CLU_004131_4_2_6"/>
<dbReference type="OrthoDB" id="9763467at2"/>
<dbReference type="PhylomeDB" id="Q87VJ2"/>
<dbReference type="Proteomes" id="UP000002515">
    <property type="component" value="Chromosome"/>
</dbReference>
<dbReference type="GO" id="GO:0032300">
    <property type="term" value="C:mismatch repair complex"/>
    <property type="evidence" value="ECO:0007669"/>
    <property type="project" value="InterPro"/>
</dbReference>
<dbReference type="GO" id="GO:0005524">
    <property type="term" value="F:ATP binding"/>
    <property type="evidence" value="ECO:0007669"/>
    <property type="project" value="InterPro"/>
</dbReference>
<dbReference type="GO" id="GO:0016887">
    <property type="term" value="F:ATP hydrolysis activity"/>
    <property type="evidence" value="ECO:0007669"/>
    <property type="project" value="InterPro"/>
</dbReference>
<dbReference type="GO" id="GO:0140664">
    <property type="term" value="F:ATP-dependent DNA damage sensor activity"/>
    <property type="evidence" value="ECO:0007669"/>
    <property type="project" value="InterPro"/>
</dbReference>
<dbReference type="GO" id="GO:0030983">
    <property type="term" value="F:mismatched DNA binding"/>
    <property type="evidence" value="ECO:0007669"/>
    <property type="project" value="InterPro"/>
</dbReference>
<dbReference type="GO" id="GO:0006298">
    <property type="term" value="P:mismatch repair"/>
    <property type="evidence" value="ECO:0007669"/>
    <property type="project" value="UniProtKB-UniRule"/>
</dbReference>
<dbReference type="CDD" id="cd16926">
    <property type="entry name" value="HATPase_MutL-MLH-PMS-like"/>
    <property type="match status" value="1"/>
</dbReference>
<dbReference type="CDD" id="cd03482">
    <property type="entry name" value="MutL_Trans_MutL"/>
    <property type="match status" value="1"/>
</dbReference>
<dbReference type="FunFam" id="3.30.230.10:FF:000013">
    <property type="entry name" value="DNA mismatch repair endonuclease MutL"/>
    <property type="match status" value="1"/>
</dbReference>
<dbReference type="FunFam" id="3.30.565.10:FF:000003">
    <property type="entry name" value="DNA mismatch repair endonuclease MutL"/>
    <property type="match status" value="1"/>
</dbReference>
<dbReference type="FunFam" id="3.30.1370.100:FF:000005">
    <property type="entry name" value="DNA mismatch repair protein MutL"/>
    <property type="match status" value="1"/>
</dbReference>
<dbReference type="Gene3D" id="3.30.230.10">
    <property type="match status" value="1"/>
</dbReference>
<dbReference type="Gene3D" id="3.30.565.10">
    <property type="entry name" value="Histidine kinase-like ATPase, C-terminal domain"/>
    <property type="match status" value="1"/>
</dbReference>
<dbReference type="Gene3D" id="3.30.1540.20">
    <property type="entry name" value="MutL, C-terminal domain, dimerisation subdomain"/>
    <property type="match status" value="1"/>
</dbReference>
<dbReference type="Gene3D" id="3.30.1370.100">
    <property type="entry name" value="MutL, C-terminal domain, regulatory subdomain"/>
    <property type="match status" value="1"/>
</dbReference>
<dbReference type="HAMAP" id="MF_00149">
    <property type="entry name" value="DNA_mis_repair"/>
    <property type="match status" value="1"/>
</dbReference>
<dbReference type="InterPro" id="IPR014762">
    <property type="entry name" value="DNA_mismatch_repair_CS"/>
</dbReference>
<dbReference type="InterPro" id="IPR020667">
    <property type="entry name" value="DNA_mismatch_repair_MutL"/>
</dbReference>
<dbReference type="InterPro" id="IPR013507">
    <property type="entry name" value="DNA_mismatch_S5_2-like"/>
</dbReference>
<dbReference type="InterPro" id="IPR036890">
    <property type="entry name" value="HATPase_C_sf"/>
</dbReference>
<dbReference type="InterPro" id="IPR002099">
    <property type="entry name" value="MutL/Mlh/PMS"/>
</dbReference>
<dbReference type="InterPro" id="IPR038973">
    <property type="entry name" value="MutL/Mlh/Pms-like"/>
</dbReference>
<dbReference type="InterPro" id="IPR014790">
    <property type="entry name" value="MutL_C"/>
</dbReference>
<dbReference type="InterPro" id="IPR042120">
    <property type="entry name" value="MutL_C_dimsub"/>
</dbReference>
<dbReference type="InterPro" id="IPR042121">
    <property type="entry name" value="MutL_C_regsub"/>
</dbReference>
<dbReference type="InterPro" id="IPR037198">
    <property type="entry name" value="MutL_C_sf"/>
</dbReference>
<dbReference type="InterPro" id="IPR020568">
    <property type="entry name" value="Ribosomal_Su5_D2-typ_SF"/>
</dbReference>
<dbReference type="InterPro" id="IPR014721">
    <property type="entry name" value="Ribsml_uS5_D2-typ_fold_subgr"/>
</dbReference>
<dbReference type="NCBIfam" id="TIGR00585">
    <property type="entry name" value="mutl"/>
    <property type="match status" value="1"/>
</dbReference>
<dbReference type="NCBIfam" id="NF000949">
    <property type="entry name" value="PRK00095.1-2"/>
    <property type="match status" value="1"/>
</dbReference>
<dbReference type="PANTHER" id="PTHR10073">
    <property type="entry name" value="DNA MISMATCH REPAIR PROTEIN MLH, PMS, MUTL"/>
    <property type="match status" value="1"/>
</dbReference>
<dbReference type="PANTHER" id="PTHR10073:SF12">
    <property type="entry name" value="DNA MISMATCH REPAIR PROTEIN MLH1"/>
    <property type="match status" value="1"/>
</dbReference>
<dbReference type="Pfam" id="PF01119">
    <property type="entry name" value="DNA_mis_repair"/>
    <property type="match status" value="1"/>
</dbReference>
<dbReference type="Pfam" id="PF13589">
    <property type="entry name" value="HATPase_c_3"/>
    <property type="match status" value="1"/>
</dbReference>
<dbReference type="Pfam" id="PF08676">
    <property type="entry name" value="MutL_C"/>
    <property type="match status" value="1"/>
</dbReference>
<dbReference type="SMART" id="SM01340">
    <property type="entry name" value="DNA_mis_repair"/>
    <property type="match status" value="1"/>
</dbReference>
<dbReference type="SMART" id="SM00853">
    <property type="entry name" value="MutL_C"/>
    <property type="match status" value="1"/>
</dbReference>
<dbReference type="SUPFAM" id="SSF55874">
    <property type="entry name" value="ATPase domain of HSP90 chaperone/DNA topoisomerase II/histidine kinase"/>
    <property type="match status" value="1"/>
</dbReference>
<dbReference type="SUPFAM" id="SSF118116">
    <property type="entry name" value="DNA mismatch repair protein MutL"/>
    <property type="match status" value="1"/>
</dbReference>
<dbReference type="SUPFAM" id="SSF54211">
    <property type="entry name" value="Ribosomal protein S5 domain 2-like"/>
    <property type="match status" value="1"/>
</dbReference>
<dbReference type="PROSITE" id="PS00058">
    <property type="entry name" value="DNA_MISMATCH_REPAIR_1"/>
    <property type="match status" value="1"/>
</dbReference>
<sequence length="645" mass="70972">MTDLLLDGSEADNAQTVLNAARIELLSPRLANQIAAGEVVERPASVIKELLENSLDSGARRIDIDVEQAGIKLLKVRDDGGGISSDDLPLALARHATSKIRDLEDLERVMSLGFRGEALASISSVARLTLTSRTRDADQAWQVETEGRDMDARVQPAAHPVGTSVEVRDLFFNTPARRKFLKAEKTEFDHLHEVIKRMALARFDVAFHLRHNGKTVLSLHEAHDDTARARRVSAICGPGFLEQALPIEIERNGLHLWGWVGLPTFSRSQADLQYFFVNGRAVRDKLVAHAVRQAYRDVLFNGRHPTFVLFFEVDPAAVDVNVHPTKHEVRFRDGRMVHDFLYGTLHRALGDVRPENQLGGSVPAAAEPRPTGPDAGEFGPQGEMRLANNVLEQPQGEPFARPAGGGSGSGYQYSPRPTTGVPVAEAQSAYREFFAPLPGTTPSALPESPSDIPPLGYALAQLKGIYILAENAHGLVLVDMHAAHERIMYERLKIAMANEGLSGQPLLVPESIAVSQREADCAEEHITTFQRLGFELQRLGPETLAIRQIPALLKQAEANRLVSDVLADLMEYGTSDRVQAHMNELLGTMACHGAIRANRRLAIPEMNGLLRDMENTERSGQCNHGRPTWTQMGLSDLDKLFLRGQ</sequence>
<protein>
    <recommendedName>
        <fullName evidence="1">DNA mismatch repair protein MutL</fullName>
    </recommendedName>
</protein>
<keyword id="KW-0227">DNA damage</keyword>
<keyword id="KW-0234">DNA repair</keyword>
<keyword id="KW-1185">Reference proteome</keyword>
<feature type="chain" id="PRO_0000177960" description="DNA mismatch repair protein MutL">
    <location>
        <begin position="1"/>
        <end position="645"/>
    </location>
</feature>
<feature type="region of interest" description="Disordered" evidence="2">
    <location>
        <begin position="353"/>
        <end position="381"/>
    </location>
</feature>
<feature type="region of interest" description="Disordered" evidence="2">
    <location>
        <begin position="395"/>
        <end position="420"/>
    </location>
</feature>
<name>MUTL_PSESM</name>
<evidence type="ECO:0000255" key="1">
    <source>
        <dbReference type="HAMAP-Rule" id="MF_00149"/>
    </source>
</evidence>
<evidence type="ECO:0000256" key="2">
    <source>
        <dbReference type="SAM" id="MobiDB-lite"/>
    </source>
</evidence>
<gene>
    <name evidence="1" type="primary">mutL</name>
    <name type="ordered locus">PSPTO_4944</name>
</gene>
<comment type="function">
    <text evidence="1">This protein is involved in the repair of mismatches in DNA. It is required for dam-dependent methyl-directed DNA mismatch repair. May act as a 'molecular matchmaker', a protein that promotes the formation of a stable complex between two or more DNA-binding proteins in an ATP-dependent manner without itself being part of a final effector complex.</text>
</comment>
<comment type="similarity">
    <text evidence="1">Belongs to the DNA mismatch repair MutL/HexB family.</text>
</comment>
<organism>
    <name type="scientific">Pseudomonas syringae pv. tomato (strain ATCC BAA-871 / DC3000)</name>
    <dbReference type="NCBI Taxonomy" id="223283"/>
    <lineage>
        <taxon>Bacteria</taxon>
        <taxon>Pseudomonadati</taxon>
        <taxon>Pseudomonadota</taxon>
        <taxon>Gammaproteobacteria</taxon>
        <taxon>Pseudomonadales</taxon>
        <taxon>Pseudomonadaceae</taxon>
        <taxon>Pseudomonas</taxon>
    </lineage>
</organism>
<reference key="1">
    <citation type="journal article" date="2003" name="Proc. Natl. Acad. Sci. U.S.A.">
        <title>The complete genome sequence of the Arabidopsis and tomato pathogen Pseudomonas syringae pv. tomato DC3000.</title>
        <authorList>
            <person name="Buell C.R."/>
            <person name="Joardar V."/>
            <person name="Lindeberg M."/>
            <person name="Selengut J."/>
            <person name="Paulsen I.T."/>
            <person name="Gwinn M.L."/>
            <person name="Dodson R.J."/>
            <person name="DeBoy R.T."/>
            <person name="Durkin A.S."/>
            <person name="Kolonay J.F."/>
            <person name="Madupu R."/>
            <person name="Daugherty S.C."/>
            <person name="Brinkac L.M."/>
            <person name="Beanan M.J."/>
            <person name="Haft D.H."/>
            <person name="Nelson W.C."/>
            <person name="Davidsen T.M."/>
            <person name="Zafar N."/>
            <person name="Zhou L."/>
            <person name="Liu J."/>
            <person name="Yuan Q."/>
            <person name="Khouri H.M."/>
            <person name="Fedorova N.B."/>
            <person name="Tran B."/>
            <person name="Russell D."/>
            <person name="Berry K.J."/>
            <person name="Utterback T.R."/>
            <person name="Van Aken S.E."/>
            <person name="Feldblyum T.V."/>
            <person name="D'Ascenzo M."/>
            <person name="Deng W.-L."/>
            <person name="Ramos A.R."/>
            <person name="Alfano J.R."/>
            <person name="Cartinhour S."/>
            <person name="Chatterjee A.K."/>
            <person name="Delaney T.P."/>
            <person name="Lazarowitz S.G."/>
            <person name="Martin G.B."/>
            <person name="Schneider D.J."/>
            <person name="Tang X."/>
            <person name="Bender C.L."/>
            <person name="White O."/>
            <person name="Fraser C.M."/>
            <person name="Collmer A."/>
        </authorList>
    </citation>
    <scope>NUCLEOTIDE SEQUENCE [LARGE SCALE GENOMIC DNA]</scope>
    <source>
        <strain>ATCC BAA-871 / DC3000</strain>
    </source>
</reference>
<proteinExistence type="inferred from homology"/>
<accession>Q87VJ2</accession>